<sequence length="453" mass="50095">MTKFSEPIRDSHVAVLAFFPVGAHAGPLLAVTRRLAAASPSTIFSFFNTARSNASLFSSDHPENIKVHDVSDGVPEGTMLGNPLEMVELFLEAAPRIFRSEIAAAEIEVGKKVTCMLTDAFFWFAADIAAELNATWVAFWAGGANSLCAHLYTDLIRETIGLKDVSMEETLGFIPGMENYRVKDIPEEVVFEDLDSVFPKALYQMSLALPRASAVFISSFEELEPTLNYNLRSKLKRFLNIAPLTLLSSTSEKEMRDPHGCFAWMGKRSAASVAYISFGTVMEPPPEELVAIAQGLESSKVPFVWSLKEKNMVHLPKGFLDRTREQGIVVPWAPQVELLKHEAMGVNVTHCGWNSVLESVSAGVPMIGRPILADNRLNGRAVEVVWKVGVMMDNGVFTKEGFEKCLNDVFVHDDGKTMKANAKKLKEKLQEDFSMKGSSLENFKILLDEIVKV</sequence>
<evidence type="ECO:0000250" key="1">
    <source>
        <dbReference type="UniProtKB" id="A0A0A1HA03"/>
    </source>
</evidence>
<evidence type="ECO:0000250" key="2">
    <source>
        <dbReference type="UniProtKB" id="P51094"/>
    </source>
</evidence>
<evidence type="ECO:0000250" key="3">
    <source>
        <dbReference type="UniProtKB" id="Q9LNE6"/>
    </source>
</evidence>
<evidence type="ECO:0000269" key="4">
    <source>
    </source>
</evidence>
<evidence type="ECO:0000269" key="5">
    <source>
    </source>
</evidence>
<evidence type="ECO:0000269" key="6">
    <source>
    </source>
</evidence>
<evidence type="ECO:0000269" key="7">
    <source>
    </source>
</evidence>
<evidence type="ECO:0000303" key="8">
    <source>
    </source>
</evidence>
<evidence type="ECO:0000305" key="9"/>
<evidence type="ECO:0000312" key="10">
    <source>
        <dbReference type="Araport" id="AT1G30530"/>
    </source>
</evidence>
<evidence type="ECO:0000312" key="11">
    <source>
        <dbReference type="EMBL" id="AAF19756.1"/>
    </source>
</evidence>
<comment type="function">
    <text evidence="4 5 6 7">Flavonol 3-O-rhamnosyltransferase that catalyzes the transfer of rhamnose from UDP-rhamnose to the 3-OH position of kaempferol and quercetin (PubMed:12900416, PubMed:15352060, PubMed:23549747, PubMed:24251900). Possesses low quercetin 3-O-glucosyltransferase activity in vitro (PubMed:12900416).</text>
</comment>
<comment type="catalytic activity">
    <reaction evidence="4 6">
        <text>kaempferol + UDP-beta-L-rhamnose = kaempferol 3-O-alpha-L-rhamnoside + UDP + H(+)</text>
        <dbReference type="Rhea" id="RHEA:61164"/>
        <dbReference type="ChEBI" id="CHEBI:15378"/>
        <dbReference type="ChEBI" id="CHEBI:58223"/>
        <dbReference type="ChEBI" id="CHEBI:58573"/>
        <dbReference type="ChEBI" id="CHEBI:83836"/>
        <dbReference type="ChEBI" id="CHEBI:144433"/>
    </reaction>
    <physiologicalReaction direction="left-to-right" evidence="4 6">
        <dbReference type="Rhea" id="RHEA:61165"/>
    </physiologicalReaction>
</comment>
<comment type="catalytic activity">
    <reaction evidence="4 6">
        <text>UDP-beta-L-rhamnose + quercetin = quercitrin + UDP + H(+)</text>
        <dbReference type="Rhea" id="RHEA:61160"/>
        <dbReference type="ChEBI" id="CHEBI:15378"/>
        <dbReference type="ChEBI" id="CHEBI:57694"/>
        <dbReference type="ChEBI" id="CHEBI:58192"/>
        <dbReference type="ChEBI" id="CHEBI:58223"/>
        <dbReference type="ChEBI" id="CHEBI:83836"/>
    </reaction>
    <physiologicalReaction direction="left-to-right" evidence="4 6">
        <dbReference type="Rhea" id="RHEA:61161"/>
    </physiologicalReaction>
</comment>
<comment type="pathway">
    <text evidence="9">Flavonoid metabolism.</text>
</comment>
<comment type="tissue specificity">
    <text evidence="4 7">Expressed in leaves, flowers, siliques, and stems (PubMed:12900416). Expressed in the shoot apex (PubMed:24251900).</text>
</comment>
<comment type="disruption phenotype">
    <text evidence="7">No visible phenotype under normal growth conditions, but mutant plants exhibit altered flavonol glycoside patter.</text>
</comment>
<comment type="similarity">
    <text evidence="9">Belongs to the UDP-glycosyltransferase family.</text>
</comment>
<proteinExistence type="evidence at protein level"/>
<protein>
    <recommendedName>
        <fullName evidence="9">Flavonol-3-O-rhamnosyltransferase</fullName>
        <ecNumber evidence="4 6">2.4.1.-</ecNumber>
    </recommendedName>
    <alternativeName>
        <fullName evidence="8">UDP-glycosyltransferase 78D1</fullName>
    </alternativeName>
    <alternativeName>
        <fullName evidence="9">UDP-rhamnose:flavonol 3-O-glucoside rhamnosyltransferase</fullName>
    </alternativeName>
</protein>
<accession>Q9S9P6</accession>
<accession>Q8LAI9</accession>
<keyword id="KW-0328">Glycosyltransferase</keyword>
<keyword id="KW-1185">Reference proteome</keyword>
<keyword id="KW-0808">Transferase</keyword>
<dbReference type="EC" id="2.4.1.-" evidence="4 6"/>
<dbReference type="EMBL" id="AC009917">
    <property type="protein sequence ID" value="AAF19756.1"/>
    <property type="molecule type" value="Genomic_DNA"/>
</dbReference>
<dbReference type="EMBL" id="CP002684">
    <property type="protein sequence ID" value="AEE31240.1"/>
    <property type="molecule type" value="Genomic_DNA"/>
</dbReference>
<dbReference type="EMBL" id="AY056312">
    <property type="protein sequence ID" value="AAL07161.1"/>
    <property type="molecule type" value="mRNA"/>
</dbReference>
<dbReference type="EMBL" id="AF360160">
    <property type="protein sequence ID" value="AAK25870.1"/>
    <property type="molecule type" value="mRNA"/>
</dbReference>
<dbReference type="EMBL" id="AY087785">
    <property type="protein sequence ID" value="AAM65321.1"/>
    <property type="molecule type" value="mRNA"/>
</dbReference>
<dbReference type="PIR" id="D86430">
    <property type="entry name" value="D86430"/>
</dbReference>
<dbReference type="RefSeq" id="NP_564357.1">
    <property type="nucleotide sequence ID" value="NM_102790.4"/>
</dbReference>
<dbReference type="SMR" id="Q9S9P6"/>
<dbReference type="BioGRID" id="25168">
    <property type="interactions" value="3"/>
</dbReference>
<dbReference type="FunCoup" id="Q9S9P6">
    <property type="interactions" value="66"/>
</dbReference>
<dbReference type="IntAct" id="Q9S9P6">
    <property type="interactions" value="1"/>
</dbReference>
<dbReference type="STRING" id="3702.Q9S9P6"/>
<dbReference type="CAZy" id="GT1">
    <property type="family name" value="Glycosyltransferase Family 1"/>
</dbReference>
<dbReference type="PaxDb" id="3702-AT1G30530.1"/>
<dbReference type="ProteomicsDB" id="242619"/>
<dbReference type="EnsemblPlants" id="AT1G30530.1">
    <property type="protein sequence ID" value="AT1G30530.1"/>
    <property type="gene ID" value="AT1G30530"/>
</dbReference>
<dbReference type="GeneID" id="839933"/>
<dbReference type="Gramene" id="AT1G30530.1">
    <property type="protein sequence ID" value="AT1G30530.1"/>
    <property type="gene ID" value="AT1G30530"/>
</dbReference>
<dbReference type="KEGG" id="ath:AT1G30530"/>
<dbReference type="Araport" id="AT1G30530"/>
<dbReference type="TAIR" id="AT1G30530">
    <property type="gene designation" value="UGT78D1"/>
</dbReference>
<dbReference type="eggNOG" id="KOG1192">
    <property type="taxonomic scope" value="Eukaryota"/>
</dbReference>
<dbReference type="HOGENOM" id="CLU_001724_0_2_1"/>
<dbReference type="InParanoid" id="Q9S9P6"/>
<dbReference type="OMA" id="FFWFCAD"/>
<dbReference type="OrthoDB" id="5835829at2759"/>
<dbReference type="PhylomeDB" id="Q9S9P6"/>
<dbReference type="BioCyc" id="ARA:AT1G30530-MONOMER"/>
<dbReference type="BioCyc" id="MetaCyc:AT1G30530-MONOMER"/>
<dbReference type="PRO" id="PR:Q9S9P6"/>
<dbReference type="Proteomes" id="UP000006548">
    <property type="component" value="Chromosome 1"/>
</dbReference>
<dbReference type="ExpressionAtlas" id="Q9S9P6">
    <property type="expression patterns" value="baseline and differential"/>
</dbReference>
<dbReference type="GO" id="GO:0080043">
    <property type="term" value="F:quercetin 3-O-glucosyltransferase activity"/>
    <property type="evidence" value="ECO:0000314"/>
    <property type="project" value="TAIR"/>
</dbReference>
<dbReference type="GO" id="GO:0008194">
    <property type="term" value="F:UDP-glycosyltransferase activity"/>
    <property type="evidence" value="ECO:0000314"/>
    <property type="project" value="TAIR"/>
</dbReference>
<dbReference type="GO" id="GO:0051555">
    <property type="term" value="P:flavonol biosynthetic process"/>
    <property type="evidence" value="ECO:0000314"/>
    <property type="project" value="TAIR"/>
</dbReference>
<dbReference type="CDD" id="cd03784">
    <property type="entry name" value="GT1_Gtf-like"/>
    <property type="match status" value="1"/>
</dbReference>
<dbReference type="FunFam" id="3.40.50.2000:FF:000091">
    <property type="entry name" value="Glycosyltransferase"/>
    <property type="match status" value="1"/>
</dbReference>
<dbReference type="FunFam" id="3.40.50.2000:FF:000129">
    <property type="entry name" value="Glycosyltransferase"/>
    <property type="match status" value="1"/>
</dbReference>
<dbReference type="Gene3D" id="3.40.50.2000">
    <property type="entry name" value="Glycogen Phosphorylase B"/>
    <property type="match status" value="2"/>
</dbReference>
<dbReference type="InterPro" id="IPR002213">
    <property type="entry name" value="UDP_glucos_trans"/>
</dbReference>
<dbReference type="PANTHER" id="PTHR11926">
    <property type="entry name" value="GLUCOSYL/GLUCURONOSYL TRANSFERASES"/>
    <property type="match status" value="1"/>
</dbReference>
<dbReference type="PANTHER" id="PTHR11926:SF774">
    <property type="entry name" value="UDP-GLYCOSYLTRANSFERASE 85A1-RELATED"/>
    <property type="match status" value="1"/>
</dbReference>
<dbReference type="Pfam" id="PF00201">
    <property type="entry name" value="UDPGT"/>
    <property type="match status" value="1"/>
</dbReference>
<dbReference type="SUPFAM" id="SSF53756">
    <property type="entry name" value="UDP-Glycosyltransferase/glycogen phosphorylase"/>
    <property type="match status" value="1"/>
</dbReference>
<name>U78D1_ARATH</name>
<organism>
    <name type="scientific">Arabidopsis thaliana</name>
    <name type="common">Mouse-ear cress</name>
    <dbReference type="NCBI Taxonomy" id="3702"/>
    <lineage>
        <taxon>Eukaryota</taxon>
        <taxon>Viridiplantae</taxon>
        <taxon>Streptophyta</taxon>
        <taxon>Embryophyta</taxon>
        <taxon>Tracheophyta</taxon>
        <taxon>Spermatophyta</taxon>
        <taxon>Magnoliopsida</taxon>
        <taxon>eudicotyledons</taxon>
        <taxon>Gunneridae</taxon>
        <taxon>Pentapetalae</taxon>
        <taxon>rosids</taxon>
        <taxon>malvids</taxon>
        <taxon>Brassicales</taxon>
        <taxon>Brassicaceae</taxon>
        <taxon>Camelineae</taxon>
        <taxon>Arabidopsis</taxon>
    </lineage>
</organism>
<gene>
    <name evidence="8" type="primary">UGT78D1</name>
    <name evidence="10" type="ordered locus">At1g30530</name>
    <name evidence="11" type="ORF">F26G16.15</name>
</gene>
<reference key="1">
    <citation type="journal article" date="2000" name="Nature">
        <title>Sequence and analysis of chromosome 1 of the plant Arabidopsis thaliana.</title>
        <authorList>
            <person name="Theologis A."/>
            <person name="Ecker J.R."/>
            <person name="Palm C.J."/>
            <person name="Federspiel N.A."/>
            <person name="Kaul S."/>
            <person name="White O."/>
            <person name="Alonso J."/>
            <person name="Altafi H."/>
            <person name="Araujo R."/>
            <person name="Bowman C.L."/>
            <person name="Brooks S.Y."/>
            <person name="Buehler E."/>
            <person name="Chan A."/>
            <person name="Chao Q."/>
            <person name="Chen H."/>
            <person name="Cheuk R.F."/>
            <person name="Chin C.W."/>
            <person name="Chung M.K."/>
            <person name="Conn L."/>
            <person name="Conway A.B."/>
            <person name="Conway A.R."/>
            <person name="Creasy T.H."/>
            <person name="Dewar K."/>
            <person name="Dunn P."/>
            <person name="Etgu P."/>
            <person name="Feldblyum T.V."/>
            <person name="Feng J.-D."/>
            <person name="Fong B."/>
            <person name="Fujii C.Y."/>
            <person name="Gill J.E."/>
            <person name="Goldsmith A.D."/>
            <person name="Haas B."/>
            <person name="Hansen N.F."/>
            <person name="Hughes B."/>
            <person name="Huizar L."/>
            <person name="Hunter J.L."/>
            <person name="Jenkins J."/>
            <person name="Johnson-Hopson C."/>
            <person name="Khan S."/>
            <person name="Khaykin E."/>
            <person name="Kim C.J."/>
            <person name="Koo H.L."/>
            <person name="Kremenetskaia I."/>
            <person name="Kurtz D.B."/>
            <person name="Kwan A."/>
            <person name="Lam B."/>
            <person name="Langin-Hooper S."/>
            <person name="Lee A."/>
            <person name="Lee J.M."/>
            <person name="Lenz C.A."/>
            <person name="Li J.H."/>
            <person name="Li Y.-P."/>
            <person name="Lin X."/>
            <person name="Liu S.X."/>
            <person name="Liu Z.A."/>
            <person name="Luros J.S."/>
            <person name="Maiti R."/>
            <person name="Marziali A."/>
            <person name="Militscher J."/>
            <person name="Miranda M."/>
            <person name="Nguyen M."/>
            <person name="Nierman W.C."/>
            <person name="Osborne B.I."/>
            <person name="Pai G."/>
            <person name="Peterson J."/>
            <person name="Pham P.K."/>
            <person name="Rizzo M."/>
            <person name="Rooney T."/>
            <person name="Rowley D."/>
            <person name="Sakano H."/>
            <person name="Salzberg S.L."/>
            <person name="Schwartz J.R."/>
            <person name="Shinn P."/>
            <person name="Southwick A.M."/>
            <person name="Sun H."/>
            <person name="Tallon L.J."/>
            <person name="Tambunga G."/>
            <person name="Toriumi M.J."/>
            <person name="Town C.D."/>
            <person name="Utterback T."/>
            <person name="Van Aken S."/>
            <person name="Vaysberg M."/>
            <person name="Vysotskaia V.S."/>
            <person name="Walker M."/>
            <person name="Wu D."/>
            <person name="Yu G."/>
            <person name="Fraser C.M."/>
            <person name="Venter J.C."/>
            <person name="Davis R.W."/>
        </authorList>
    </citation>
    <scope>NUCLEOTIDE SEQUENCE [LARGE SCALE GENOMIC DNA]</scope>
    <source>
        <strain>cv. Columbia</strain>
    </source>
</reference>
<reference key="2">
    <citation type="journal article" date="2017" name="Plant J.">
        <title>Araport11: a complete reannotation of the Arabidopsis thaliana reference genome.</title>
        <authorList>
            <person name="Cheng C.Y."/>
            <person name="Krishnakumar V."/>
            <person name="Chan A.P."/>
            <person name="Thibaud-Nissen F."/>
            <person name="Schobel S."/>
            <person name="Town C.D."/>
        </authorList>
    </citation>
    <scope>GENOME REANNOTATION</scope>
    <source>
        <strain>cv. Columbia</strain>
    </source>
</reference>
<reference key="3">
    <citation type="journal article" date="2003" name="Science">
        <title>Empirical analysis of transcriptional activity in the Arabidopsis genome.</title>
        <authorList>
            <person name="Yamada K."/>
            <person name="Lim J."/>
            <person name="Dale J.M."/>
            <person name="Chen H."/>
            <person name="Shinn P."/>
            <person name="Palm C.J."/>
            <person name="Southwick A.M."/>
            <person name="Wu H.C."/>
            <person name="Kim C.J."/>
            <person name="Nguyen M."/>
            <person name="Pham P.K."/>
            <person name="Cheuk R.F."/>
            <person name="Karlin-Newmann G."/>
            <person name="Liu S.X."/>
            <person name="Lam B."/>
            <person name="Sakano H."/>
            <person name="Wu T."/>
            <person name="Yu G."/>
            <person name="Miranda M."/>
            <person name="Quach H.L."/>
            <person name="Tripp M."/>
            <person name="Chang C.H."/>
            <person name="Lee J.M."/>
            <person name="Toriumi M.J."/>
            <person name="Chan M.M."/>
            <person name="Tang C.C."/>
            <person name="Onodera C.S."/>
            <person name="Deng J.M."/>
            <person name="Akiyama K."/>
            <person name="Ansari Y."/>
            <person name="Arakawa T."/>
            <person name="Banh J."/>
            <person name="Banno F."/>
            <person name="Bowser L."/>
            <person name="Brooks S.Y."/>
            <person name="Carninci P."/>
            <person name="Chao Q."/>
            <person name="Choy N."/>
            <person name="Enju A."/>
            <person name="Goldsmith A.D."/>
            <person name="Gurjal M."/>
            <person name="Hansen N.F."/>
            <person name="Hayashizaki Y."/>
            <person name="Johnson-Hopson C."/>
            <person name="Hsuan V.W."/>
            <person name="Iida K."/>
            <person name="Karnes M."/>
            <person name="Khan S."/>
            <person name="Koesema E."/>
            <person name="Ishida J."/>
            <person name="Jiang P.X."/>
            <person name="Jones T."/>
            <person name="Kawai J."/>
            <person name="Kamiya A."/>
            <person name="Meyers C."/>
            <person name="Nakajima M."/>
            <person name="Narusaka M."/>
            <person name="Seki M."/>
            <person name="Sakurai T."/>
            <person name="Satou M."/>
            <person name="Tamse R."/>
            <person name="Vaysberg M."/>
            <person name="Wallender E.K."/>
            <person name="Wong C."/>
            <person name="Yamamura Y."/>
            <person name="Yuan S."/>
            <person name="Shinozaki K."/>
            <person name="Davis R.W."/>
            <person name="Theologis A."/>
            <person name="Ecker J.R."/>
        </authorList>
    </citation>
    <scope>NUCLEOTIDE SEQUENCE [LARGE SCALE MRNA]</scope>
    <source>
        <strain>cv. Columbia</strain>
    </source>
</reference>
<reference key="4">
    <citation type="submission" date="2002-03" db="EMBL/GenBank/DDBJ databases">
        <title>Full-length cDNA from Arabidopsis thaliana.</title>
        <authorList>
            <person name="Brover V.V."/>
            <person name="Troukhan M.E."/>
            <person name="Alexandrov N.A."/>
            <person name="Lu Y.-P."/>
            <person name="Flavell R.B."/>
            <person name="Feldmann K.A."/>
        </authorList>
    </citation>
    <scope>NUCLEOTIDE SEQUENCE [LARGE SCALE MRNA]</scope>
</reference>
<reference key="5">
    <citation type="journal article" date="2001" name="J. Biol. Chem.">
        <title>Phylogenetic analysis of the UDP-glycosyltransferase multigene family of Arabidopsis thaliana.</title>
        <authorList>
            <person name="Li Y."/>
            <person name="Baldauf S."/>
            <person name="Lim E.K."/>
            <person name="Bowles D.J."/>
        </authorList>
    </citation>
    <scope>GENE FAMILY</scope>
</reference>
<reference key="6">
    <citation type="journal article" date="2003" name="J. Biol. Chem.">
        <title>UGT73C6 and UGT78D1, glycosyltransferases involved in flavonol glycoside biosynthesis in Arabidopsis thaliana.</title>
        <authorList>
            <person name="Jones P."/>
            <person name="Messner B."/>
            <person name="Nakajima J."/>
            <person name="Schaffner A.R."/>
            <person name="Saito K."/>
        </authorList>
    </citation>
    <scope>FUNCTION</scope>
    <scope>CATALYTIC ACTIVITY</scope>
    <scope>TISSUE SPECIFICITY</scope>
</reference>
<reference key="7">
    <citation type="journal article" date="2004" name="Biotechnol. Bioeng.">
        <title>Arabidopsis glycosyltransferases as biocatalysts in fermentation for regioselective synthesis of diverse quercetin glucosides.</title>
        <authorList>
            <person name="Lim E.K."/>
            <person name="Ashford D.A."/>
            <person name="Hou B."/>
            <person name="Jackson R.G."/>
            <person name="Bowles D.J."/>
        </authorList>
    </citation>
    <scope>FUNCTION</scope>
</reference>
<reference key="8">
    <citation type="journal article" date="2013" name="Appl. Microbiol. Biotechnol.">
        <title>Regioselective synthesis of flavonoid bisglycosides using Escherichia coli harboring two glycosyltransferases.</title>
        <authorList>
            <person name="Kim H.J."/>
            <person name="Kim B.G."/>
            <person name="Ahn J.H."/>
        </authorList>
    </citation>
    <scope>FUNCTION</scope>
    <scope>CATALYTIC ACTIVITY</scope>
</reference>
<reference key="9">
    <citation type="journal article" date="2013" name="Plant Physiol. Biochem.">
        <title>The flavonoid biosynthetic pathway in Arabidopsis: Structural and genetic diversity.</title>
        <authorList>
            <person name="Saito K."/>
            <person name="Yonekura-Sakakibara K."/>
            <person name="Nakabayashi R."/>
            <person name="Higashi Y."/>
            <person name="Yamazaki M."/>
            <person name="Tohge T."/>
            <person name="Fernie A.R."/>
        </authorList>
    </citation>
    <scope>REVIEW</scope>
    <scope>NOMENCLATURE</scope>
</reference>
<reference key="10">
    <citation type="journal article" date="2014" name="New Phytol.">
        <title>Kaempferol 3-O-rhamnoside-7-O-rhamnoside is an endogenous flavonol inhibitor of polar auxin transport in Arabidopsis shoots.</title>
        <authorList>
            <person name="Yin R."/>
            <person name="Han K."/>
            <person name="Heller W."/>
            <person name="Albert A."/>
            <person name="Dobrev P.I."/>
            <person name="Zazimalova E."/>
            <person name="Schaeffner A.R."/>
        </authorList>
    </citation>
    <scope>FUNCTION</scope>
    <scope>TISSUE SPECIFICITY</scope>
    <scope>DISRUPTION PHENOTYPE</scope>
</reference>
<feature type="chain" id="PRO_0000074159" description="Flavonol-3-O-rhamnosyltransferase">
    <location>
        <begin position="1"/>
        <end position="453"/>
    </location>
</feature>
<feature type="active site" description="Proton acceptor" evidence="1">
    <location>
        <position position="24"/>
    </location>
</feature>
<feature type="active site" description="Charge relay" evidence="1">
    <location>
        <position position="119"/>
    </location>
</feature>
<feature type="binding site" evidence="2">
    <location>
        <position position="24"/>
    </location>
    <ligand>
        <name>an anthocyanidin</name>
        <dbReference type="ChEBI" id="CHEBI:143576"/>
    </ligand>
</feature>
<feature type="binding site" evidence="2">
    <location>
        <position position="150"/>
    </location>
    <ligand>
        <name>an anthocyanidin</name>
        <dbReference type="ChEBI" id="CHEBI:143576"/>
    </ligand>
</feature>
<feature type="binding site" evidence="3">
    <location>
        <position position="280"/>
    </location>
    <ligand>
        <name>UDP-beta-L-rhamnose</name>
        <dbReference type="ChEBI" id="CHEBI:83836"/>
    </ligand>
</feature>
<feature type="binding site" evidence="3">
    <location>
        <position position="333"/>
    </location>
    <ligand>
        <name>UDP-beta-L-rhamnose</name>
        <dbReference type="ChEBI" id="CHEBI:83836"/>
    </ligand>
</feature>
<feature type="binding site" evidence="3">
    <location>
        <position position="350"/>
    </location>
    <ligand>
        <name>UDP-beta-L-rhamnose</name>
        <dbReference type="ChEBI" id="CHEBI:83836"/>
    </ligand>
</feature>
<feature type="binding site" evidence="3">
    <location>
        <position position="354"/>
    </location>
    <ligand>
        <name>UDP-beta-L-rhamnose</name>
        <dbReference type="ChEBI" id="CHEBI:83836"/>
    </ligand>
</feature>
<feature type="binding site" evidence="3">
    <location>
        <position position="355"/>
    </location>
    <ligand>
        <name>UDP-beta-L-rhamnose</name>
        <dbReference type="ChEBI" id="CHEBI:83836"/>
    </ligand>
</feature>
<feature type="binding site" evidence="3">
    <location>
        <position position="358"/>
    </location>
    <ligand>
        <name>UDP-beta-L-rhamnose</name>
        <dbReference type="ChEBI" id="CHEBI:83836"/>
    </ligand>
</feature>
<feature type="binding site" evidence="2">
    <location>
        <position position="373"/>
    </location>
    <ligand>
        <name>an anthocyanidin</name>
        <dbReference type="ChEBI" id="CHEBI:143576"/>
    </ligand>
</feature>
<feature type="sequence conflict" description="In Ref. 4; AAM65321." evidence="9" ref="4">
    <original>V</original>
    <variation>D</variation>
    <location>
        <position position="330"/>
    </location>
</feature>
<feature type="sequence conflict" description="In Ref. 4; AAM65321." evidence="9" ref="4">
    <original>Q</original>
    <variation>H</variation>
    <location>
        <position position="430"/>
    </location>
</feature>
<feature type="sequence conflict" description="In Ref. 4; AAM65321." evidence="9" ref="4">
    <original>L</original>
    <variation>F</variation>
    <location>
        <position position="440"/>
    </location>
</feature>
<feature type="sequence conflict" description="In Ref. 4; AAM65321." evidence="9" ref="4">
    <original>I</original>
    <variation>V</variation>
    <location>
        <position position="445"/>
    </location>
</feature>